<sequence length="43" mass="4429">MSGIVEAISNAVKSGLDHDWVNMGTSIADVVAKGADFIAGFFS</sequence>
<dbReference type="SMR" id="P85222"/>
<dbReference type="GO" id="GO:0005576">
    <property type="term" value="C:extracellular region"/>
    <property type="evidence" value="ECO:0007669"/>
    <property type="project" value="UniProtKB-SubCell"/>
</dbReference>
<dbReference type="GO" id="GO:0090729">
    <property type="term" value="F:toxin activity"/>
    <property type="evidence" value="ECO:0007669"/>
    <property type="project" value="UniProtKB-KW"/>
</dbReference>
<dbReference type="GO" id="GO:0031640">
    <property type="term" value="P:killing of cells of another organism"/>
    <property type="evidence" value="ECO:0007669"/>
    <property type="project" value="UniProtKB-KW"/>
</dbReference>
<dbReference type="InterPro" id="IPR008846">
    <property type="entry name" value="PSMbeta"/>
</dbReference>
<dbReference type="Pfam" id="PF05480">
    <property type="entry name" value="PSMbeta"/>
    <property type="match status" value="1"/>
</dbReference>
<accession>P85222</accession>
<organism>
    <name type="scientific">Staphylococcus ureilyticus</name>
    <name type="common">Staphylococcus cohnii subsp. urealyticus</name>
    <dbReference type="NCBI Taxonomy" id="94138"/>
    <lineage>
        <taxon>Bacteria</taxon>
        <taxon>Bacillati</taxon>
        <taxon>Bacillota</taxon>
        <taxon>Bacilli</taxon>
        <taxon>Bacillales</taxon>
        <taxon>Staphylococcaceae</taxon>
        <taxon>Staphylococcus</taxon>
        <taxon>Staphylococcus cohnii species complex</taxon>
    </lineage>
</organism>
<protein>
    <recommendedName>
        <fullName>Hemolysin H1U</fullName>
    </recommendedName>
</protein>
<proteinExistence type="evidence at protein level"/>
<reference evidence="3" key="1">
    <citation type="journal article" date="2008" name="FEMS Microbiol. Lett.">
        <title>The amino acid sequences and activities of synergistic hemolysins from Staphylococcus cohnii.</title>
        <authorList>
            <person name="Mak P."/>
            <person name="Maszewska A."/>
            <person name="Rozalska M."/>
        </authorList>
    </citation>
    <scope>PROTEIN SEQUENCE</scope>
    <scope>FUNCTION</scope>
    <scope>SUBCELLULAR LOCATION</scope>
    <scope>FORMYLATION AT MET-1</scope>
    <source>
        <strain evidence="2">ZMF 535</strain>
    </source>
</reference>
<evidence type="ECO:0000255" key="1"/>
<evidence type="ECO:0000269" key="2">
    <source>
    </source>
</evidence>
<evidence type="ECO:0000305" key="3"/>
<feature type="peptide" id="PRO_0000302133" description="Hemolysin H1U">
    <location>
        <begin position="1"/>
        <end position="43"/>
    </location>
</feature>
<feature type="modified residue" description="N-formylmethionine" evidence="2">
    <location>
        <position position="1"/>
    </location>
</feature>
<name>HLY1U_STAUR</name>
<comment type="function">
    <text evidence="2">Virulence factor. Causes hemolysis of erythrocytes. Acts synergistically with beta-hemolysins from S.aureus ATCC 25923. Cytotoxic towards human dermal fibroblasts.</text>
</comment>
<comment type="subcellular location">
    <subcellularLocation>
        <location evidence="2">Secreted</location>
    </subcellularLocation>
</comment>
<comment type="similarity">
    <text evidence="1">Belongs to the staphylococcal hemolytic protein family.</text>
</comment>
<keyword id="KW-0204">Cytolysis</keyword>
<keyword id="KW-0903">Direct protein sequencing</keyword>
<keyword id="KW-0291">Formylation</keyword>
<keyword id="KW-0354">Hemolysis</keyword>
<keyword id="KW-0964">Secreted</keyword>
<keyword id="KW-0800">Toxin</keyword>
<keyword id="KW-0843">Virulence</keyword>